<comment type="function">
    <text evidence="1">May be involved in the transport of PQQ or its precursor to the periplasm.</text>
</comment>
<comment type="pathway">
    <text evidence="1">Cofactor biosynthesis; pyrroloquinoline quinone biosynthesis.</text>
</comment>
<comment type="similarity">
    <text evidence="1">Belongs to the PqqB family.</text>
</comment>
<accession>B0RQ28</accession>
<feature type="chain" id="PRO_1000131170" description="Coenzyme PQQ synthesis protein B">
    <location>
        <begin position="1"/>
        <end position="299"/>
    </location>
</feature>
<sequence>MRIIVLGSAAGGGHPQWNCHTPASQRAWQQADGAQRRTQASIAVSADGQRWVLINASPDFRQQILATPALWPQHGLRHSPIESVLLTSGEIDHIAGLLSMRESQRFSLHASSRVLDLLAQNPIFDALNPQYVDRHPFALNTPLTLCDLQLTPFSVPGKVPLFMESRSGGDLAGSNEETLGLTIDDGRHRVHYIPGCAAMTDDLRARLHGAELVFFDGTLWRDDEMVQLGVSQKTGQRMGHMSIDGTDGTLAAFAQLQVARKVLIHINTTNPVLDAHSPEHAAVRAAGWDVAHDGLEISL</sequence>
<organism>
    <name type="scientific">Xanthomonas campestris pv. campestris (strain B100)</name>
    <dbReference type="NCBI Taxonomy" id="509169"/>
    <lineage>
        <taxon>Bacteria</taxon>
        <taxon>Pseudomonadati</taxon>
        <taxon>Pseudomonadota</taxon>
        <taxon>Gammaproteobacteria</taxon>
        <taxon>Lysobacterales</taxon>
        <taxon>Lysobacteraceae</taxon>
        <taxon>Xanthomonas</taxon>
    </lineage>
</organism>
<keyword id="KW-0884">PQQ biosynthesis</keyword>
<keyword id="KW-0813">Transport</keyword>
<reference key="1">
    <citation type="journal article" date="2008" name="J. Biotechnol.">
        <title>The genome of Xanthomonas campestris pv. campestris B100 and its use for the reconstruction of metabolic pathways involved in xanthan biosynthesis.</title>
        <authorList>
            <person name="Vorhoelter F.-J."/>
            <person name="Schneiker S."/>
            <person name="Goesmann A."/>
            <person name="Krause L."/>
            <person name="Bekel T."/>
            <person name="Kaiser O."/>
            <person name="Linke B."/>
            <person name="Patschkowski T."/>
            <person name="Rueckert C."/>
            <person name="Schmid J."/>
            <person name="Sidhu V.K."/>
            <person name="Sieber V."/>
            <person name="Tauch A."/>
            <person name="Watt S.A."/>
            <person name="Weisshaar B."/>
            <person name="Becker A."/>
            <person name="Niehaus K."/>
            <person name="Puehler A."/>
        </authorList>
    </citation>
    <scope>NUCLEOTIDE SEQUENCE [LARGE SCALE GENOMIC DNA]</scope>
    <source>
        <strain>B100</strain>
    </source>
</reference>
<evidence type="ECO:0000255" key="1">
    <source>
        <dbReference type="HAMAP-Rule" id="MF_00653"/>
    </source>
</evidence>
<name>PQQB_XANCB</name>
<dbReference type="EMBL" id="AM920689">
    <property type="protein sequence ID" value="CAP50563.1"/>
    <property type="molecule type" value="Genomic_DNA"/>
</dbReference>
<dbReference type="SMR" id="B0RQ28"/>
<dbReference type="KEGG" id="xca:xcc-b100_1215"/>
<dbReference type="HOGENOM" id="CLU_061120_0_0_6"/>
<dbReference type="UniPathway" id="UPA00539"/>
<dbReference type="Proteomes" id="UP000001188">
    <property type="component" value="Chromosome"/>
</dbReference>
<dbReference type="GO" id="GO:0018189">
    <property type="term" value="P:pyrroloquinoline quinone biosynthetic process"/>
    <property type="evidence" value="ECO:0007669"/>
    <property type="project" value="UniProtKB-UniRule"/>
</dbReference>
<dbReference type="CDD" id="cd16274">
    <property type="entry name" value="PQQB-like_MBL-fold"/>
    <property type="match status" value="1"/>
</dbReference>
<dbReference type="Gene3D" id="3.60.15.10">
    <property type="entry name" value="Ribonuclease Z/Hydroxyacylglutathione hydrolase-like"/>
    <property type="match status" value="1"/>
</dbReference>
<dbReference type="HAMAP" id="MF_00653">
    <property type="entry name" value="PQQ_syn_PqqB"/>
    <property type="match status" value="1"/>
</dbReference>
<dbReference type="InterPro" id="IPR001279">
    <property type="entry name" value="Metallo-B-lactamas"/>
</dbReference>
<dbReference type="InterPro" id="IPR011842">
    <property type="entry name" value="PQQ_synth_PqqB"/>
</dbReference>
<dbReference type="InterPro" id="IPR036866">
    <property type="entry name" value="RibonucZ/Hydroxyglut_hydro"/>
</dbReference>
<dbReference type="NCBIfam" id="TIGR02108">
    <property type="entry name" value="PQQ_syn_pqqB"/>
    <property type="match status" value="1"/>
</dbReference>
<dbReference type="PANTHER" id="PTHR42663:SF7">
    <property type="entry name" value="COENZYME PQQ SYNTHESIS PROTEIN B"/>
    <property type="match status" value="1"/>
</dbReference>
<dbReference type="PANTHER" id="PTHR42663">
    <property type="entry name" value="HYDROLASE C777.06C-RELATED-RELATED"/>
    <property type="match status" value="1"/>
</dbReference>
<dbReference type="Pfam" id="PF12706">
    <property type="entry name" value="Lactamase_B_2"/>
    <property type="match status" value="1"/>
</dbReference>
<dbReference type="SUPFAM" id="SSF56281">
    <property type="entry name" value="Metallo-hydrolase/oxidoreductase"/>
    <property type="match status" value="1"/>
</dbReference>
<gene>
    <name evidence="1" type="primary">pqqB</name>
    <name type="ordered locus">xcc-b100_1215</name>
</gene>
<protein>
    <recommendedName>
        <fullName evidence="1">Coenzyme PQQ synthesis protein B</fullName>
    </recommendedName>
    <alternativeName>
        <fullName evidence="1">Pyrroloquinoline quinone biosynthesis protein B</fullName>
    </alternativeName>
</protein>
<proteinExistence type="inferred from homology"/>